<name>ANIA_NEIMB</name>
<sequence length="390" mass="40763">MKRQALAAMIASLFALAACGGEPAAQAPAETPAAAAEAASSAAQTAAETPSGELPVIDAVTTHAPEVPPAIDRDYPAKVRVKMETVEKTMTMEDGVEYRYWTFDGDVPGRMIRVREGDTVEVEFSNNPSSTVPHNVDFHAATGQGGGAAATFTAPGRTSTFSFKALQPGLYIYHCAVAPVGMHIANGMYGLILVEPKEGLPKVDKEFYIVQGDFYTKGKKGAQGLQPFDMDKAVAEQPEYVVFNGHVGAIAGDNALKAKAGETVRMYVGNGGPNLVSSFHVIGEIFDKVYVEGGKLINENVQSTIVPAGGSAIVEFKVDIPGSYTLVDHSIFRAFNKGALGQLKVEGAENPEIMTQKLSDTAYAGNGAAPAASAPAASAPAASASEKSVY</sequence>
<protein>
    <recommendedName>
        <fullName>Copper-containing nitrite reductase</fullName>
        <ecNumber>1.7.2.1</ecNumber>
    </recommendedName>
</protein>
<keyword id="KW-0998">Cell outer membrane</keyword>
<keyword id="KW-0186">Copper</keyword>
<keyword id="KW-0449">Lipoprotein</keyword>
<keyword id="KW-0472">Membrane</keyword>
<keyword id="KW-0479">Metal-binding</keyword>
<keyword id="KW-0560">Oxidoreductase</keyword>
<keyword id="KW-0564">Palmitate</keyword>
<keyword id="KW-1185">Reference proteome</keyword>
<keyword id="KW-0677">Repeat</keyword>
<keyword id="KW-0732">Signal</keyword>
<comment type="function">
    <text evidence="4">Catalyzes the reduction of nitrite to nitric oxide (NO). It could be essential for growth and survival in oxygen-depleted environments.</text>
</comment>
<comment type="catalytic activity">
    <reaction>
        <text>nitric oxide + Fe(III)-[cytochrome c] + H2O = Fe(II)-[cytochrome c] + nitrite + 2 H(+)</text>
        <dbReference type="Rhea" id="RHEA:15233"/>
        <dbReference type="Rhea" id="RHEA-COMP:10350"/>
        <dbReference type="Rhea" id="RHEA-COMP:14399"/>
        <dbReference type="ChEBI" id="CHEBI:15377"/>
        <dbReference type="ChEBI" id="CHEBI:15378"/>
        <dbReference type="ChEBI" id="CHEBI:16301"/>
        <dbReference type="ChEBI" id="CHEBI:16480"/>
        <dbReference type="ChEBI" id="CHEBI:29033"/>
        <dbReference type="ChEBI" id="CHEBI:29034"/>
        <dbReference type="EC" id="1.7.2.1"/>
    </reaction>
</comment>
<comment type="cofactor">
    <cofactor evidence="1">
        <name>Cu(+)</name>
        <dbReference type="ChEBI" id="CHEBI:49552"/>
    </cofactor>
    <text evidence="1">Binds 1 Cu(+) ion.</text>
</comment>
<comment type="cofactor">
    <cofactor evidence="1">
        <name>Cu(2+)</name>
        <dbReference type="ChEBI" id="CHEBI:29036"/>
    </cofactor>
    <text evidence="1">Binds 1 Cu(2+) ion.</text>
</comment>
<comment type="subunit">
    <text evidence="1">Homotrimer.</text>
</comment>
<comment type="subcellular location">
    <subcellularLocation>
        <location evidence="5">Cell outer membrane</location>
        <topology evidence="5">Lipid-anchor</topology>
    </subcellularLocation>
</comment>
<comment type="similarity">
    <text evidence="5">Belongs to the multicopper oxidase family.</text>
</comment>
<proteinExistence type="inferred from homology"/>
<organism>
    <name type="scientific">Neisseria meningitidis serogroup B (strain ATCC BAA-335 / MC58)</name>
    <dbReference type="NCBI Taxonomy" id="122586"/>
    <lineage>
        <taxon>Bacteria</taxon>
        <taxon>Pseudomonadati</taxon>
        <taxon>Pseudomonadota</taxon>
        <taxon>Betaproteobacteria</taxon>
        <taxon>Neisseriales</taxon>
        <taxon>Neisseriaceae</taxon>
        <taxon>Neisseria</taxon>
    </lineage>
</organism>
<gene>
    <name type="primary">aniA</name>
    <name type="ordered locus">NMB1623</name>
</gene>
<reference key="1">
    <citation type="journal article" date="2000" name="Science">
        <title>Complete genome sequence of Neisseria meningitidis serogroup B strain MC58.</title>
        <authorList>
            <person name="Tettelin H."/>
            <person name="Saunders N.J."/>
            <person name="Heidelberg J.F."/>
            <person name="Jeffries A.C."/>
            <person name="Nelson K.E."/>
            <person name="Eisen J.A."/>
            <person name="Ketchum K.A."/>
            <person name="Hood D.W."/>
            <person name="Peden J.F."/>
            <person name="Dodson R.J."/>
            <person name="Nelson W.C."/>
            <person name="Gwinn M.L."/>
            <person name="DeBoy R.T."/>
            <person name="Peterson J.D."/>
            <person name="Hickey E.K."/>
            <person name="Haft D.H."/>
            <person name="Salzberg S.L."/>
            <person name="White O."/>
            <person name="Fleischmann R.D."/>
            <person name="Dougherty B.A."/>
            <person name="Mason T.M."/>
            <person name="Ciecko A."/>
            <person name="Parksey D.S."/>
            <person name="Blair E."/>
            <person name="Cittone H."/>
            <person name="Clark E.B."/>
            <person name="Cotton M.D."/>
            <person name="Utterback T.R."/>
            <person name="Khouri H.M."/>
            <person name="Qin H."/>
            <person name="Vamathevan J.J."/>
            <person name="Gill J."/>
            <person name="Scarlato V."/>
            <person name="Masignani V."/>
            <person name="Pizza M."/>
            <person name="Grandi G."/>
            <person name="Sun L."/>
            <person name="Smith H.O."/>
            <person name="Fraser C.M."/>
            <person name="Moxon E.R."/>
            <person name="Rappuoli R."/>
            <person name="Venter J.C."/>
        </authorList>
    </citation>
    <scope>NUCLEOTIDE SEQUENCE [LARGE SCALE GENOMIC DNA]</scope>
    <source>
        <strain>ATCC BAA-335 / MC58</strain>
    </source>
</reference>
<reference key="2">
    <citation type="journal article" date="2002" name="J. Bacteriol.">
        <title>Nitric oxide metabolism in Neisseria meningitidis.</title>
        <authorList>
            <person name="Anjum M.F."/>
            <person name="Stevanin T.M."/>
            <person name="Read R.C."/>
            <person name="Moir J.W.B."/>
        </authorList>
    </citation>
    <scope>FUNCTION</scope>
    <source>
        <strain>ATCC BAA-335 / MC58</strain>
    </source>
</reference>
<evidence type="ECO:0000250" key="1"/>
<evidence type="ECO:0000255" key="2">
    <source>
        <dbReference type="PROSITE-ProRule" id="PRU00303"/>
    </source>
</evidence>
<evidence type="ECO:0000256" key="3">
    <source>
        <dbReference type="SAM" id="MobiDB-lite"/>
    </source>
</evidence>
<evidence type="ECO:0000269" key="4">
    <source>
    </source>
</evidence>
<evidence type="ECO:0000305" key="5"/>
<dbReference type="EC" id="1.7.2.1"/>
<dbReference type="EMBL" id="AE002098">
    <property type="protein sequence ID" value="AAF41975.1"/>
    <property type="molecule type" value="Genomic_DNA"/>
</dbReference>
<dbReference type="PIR" id="E81062">
    <property type="entry name" value="E81062"/>
</dbReference>
<dbReference type="RefSeq" id="NP_274629.1">
    <property type="nucleotide sequence ID" value="NC_003112.2"/>
</dbReference>
<dbReference type="SMR" id="Q9JYE1"/>
<dbReference type="STRING" id="122586.NMB1623"/>
<dbReference type="PaxDb" id="122586-NMB1623"/>
<dbReference type="KEGG" id="nme:NMB1623"/>
<dbReference type="PATRIC" id="fig|122586.8.peg.2084"/>
<dbReference type="HOGENOM" id="CLU_031740_1_1_4"/>
<dbReference type="InParanoid" id="Q9JYE1"/>
<dbReference type="OrthoDB" id="9757546at2"/>
<dbReference type="BRENDA" id="1.7.2.1">
    <property type="organism ID" value="3593"/>
</dbReference>
<dbReference type="Proteomes" id="UP000000425">
    <property type="component" value="Chromosome"/>
</dbReference>
<dbReference type="GO" id="GO:0009279">
    <property type="term" value="C:cell outer membrane"/>
    <property type="evidence" value="ECO:0007669"/>
    <property type="project" value="UniProtKB-SubCell"/>
</dbReference>
<dbReference type="GO" id="GO:0005507">
    <property type="term" value="F:copper ion binding"/>
    <property type="evidence" value="ECO:0007669"/>
    <property type="project" value="InterPro"/>
</dbReference>
<dbReference type="GO" id="GO:0050421">
    <property type="term" value="F:nitrite reductase (NO-forming) activity"/>
    <property type="evidence" value="ECO:0007669"/>
    <property type="project" value="UniProtKB-EC"/>
</dbReference>
<dbReference type="GO" id="GO:0016491">
    <property type="term" value="F:oxidoreductase activity"/>
    <property type="evidence" value="ECO:0000318"/>
    <property type="project" value="GO_Central"/>
</dbReference>
<dbReference type="GO" id="GO:0071281">
    <property type="term" value="P:cellular response to iron ion"/>
    <property type="evidence" value="ECO:0000269"/>
    <property type="project" value="CollecTF"/>
</dbReference>
<dbReference type="CDD" id="cd04201">
    <property type="entry name" value="CuRO_1_CuNIR_like"/>
    <property type="match status" value="1"/>
</dbReference>
<dbReference type="CDD" id="cd04208">
    <property type="entry name" value="CuRO_2_CuNIR"/>
    <property type="match status" value="1"/>
</dbReference>
<dbReference type="FunFam" id="2.60.40.420:FF:000091">
    <property type="entry name" value="Copper-containing nitrite reductase"/>
    <property type="match status" value="1"/>
</dbReference>
<dbReference type="Gene3D" id="2.60.40.420">
    <property type="entry name" value="Cupredoxins - blue copper proteins"/>
    <property type="match status" value="1"/>
</dbReference>
<dbReference type="InterPro" id="IPR011707">
    <property type="entry name" value="Cu-oxidase-like_N"/>
</dbReference>
<dbReference type="InterPro" id="IPR045087">
    <property type="entry name" value="Cu-oxidase_fam"/>
</dbReference>
<dbReference type="InterPro" id="IPR008972">
    <property type="entry name" value="Cupredoxin"/>
</dbReference>
<dbReference type="InterPro" id="IPR001287">
    <property type="entry name" value="NO2-reductase_Cu"/>
</dbReference>
<dbReference type="NCBIfam" id="TIGR02376">
    <property type="entry name" value="Cu_nitrite_red"/>
    <property type="match status" value="1"/>
</dbReference>
<dbReference type="PANTHER" id="PTHR11709:SF394">
    <property type="entry name" value="FI03373P-RELATED"/>
    <property type="match status" value="1"/>
</dbReference>
<dbReference type="PANTHER" id="PTHR11709">
    <property type="entry name" value="MULTI-COPPER OXIDASE"/>
    <property type="match status" value="1"/>
</dbReference>
<dbReference type="Pfam" id="PF07732">
    <property type="entry name" value="Cu-oxidase_3"/>
    <property type="match status" value="1"/>
</dbReference>
<dbReference type="PRINTS" id="PR00695">
    <property type="entry name" value="CUNO2RDTASE"/>
</dbReference>
<dbReference type="SUPFAM" id="SSF49503">
    <property type="entry name" value="Cupredoxins"/>
    <property type="match status" value="2"/>
</dbReference>
<dbReference type="PROSITE" id="PS51257">
    <property type="entry name" value="PROKAR_LIPOPROTEIN"/>
    <property type="match status" value="1"/>
</dbReference>
<feature type="signal peptide" evidence="2">
    <location>
        <begin position="1"/>
        <end position="18"/>
    </location>
</feature>
<feature type="chain" id="PRO_0000002999" description="Copper-containing nitrite reductase">
    <location>
        <begin position="19"/>
        <end position="390"/>
    </location>
</feature>
<feature type="domain" description="Plastocyanin-like 1">
    <location>
        <begin position="101"/>
        <end position="195"/>
    </location>
</feature>
<feature type="domain" description="Plastocyanin-like 2">
    <location>
        <begin position="245"/>
        <end position="346"/>
    </location>
</feature>
<feature type="repeat" description="1">
    <location>
        <begin position="371"/>
        <end position="375"/>
    </location>
</feature>
<feature type="repeat" description="2">
    <location>
        <begin position="376"/>
        <end position="380"/>
    </location>
</feature>
<feature type="repeat" description="3">
    <location>
        <begin position="381"/>
        <end position="385"/>
    </location>
</feature>
<feature type="region of interest" description="Disordered" evidence="3">
    <location>
        <begin position="30"/>
        <end position="51"/>
    </location>
</feature>
<feature type="region of interest" description="Disordered" evidence="3">
    <location>
        <begin position="367"/>
        <end position="390"/>
    </location>
</feature>
<feature type="region of interest" description="3 X 5 AA tandem repeats of A-A-S-A-P">
    <location>
        <begin position="371"/>
        <end position="385"/>
    </location>
</feature>
<feature type="compositionally biased region" description="Low complexity" evidence="3">
    <location>
        <begin position="368"/>
        <end position="390"/>
    </location>
</feature>
<feature type="binding site" description="type 1 copper site" evidence="1">
    <location>
        <position position="134"/>
    </location>
    <ligand>
        <name>Cu cation</name>
        <dbReference type="ChEBI" id="CHEBI:23378"/>
        <label>1</label>
    </ligand>
</feature>
<feature type="binding site" description="type 2 copper site" evidence="1">
    <location>
        <position position="139"/>
    </location>
    <ligand>
        <name>Cu cation</name>
        <dbReference type="ChEBI" id="CHEBI:23378"/>
        <label>2</label>
    </ligand>
</feature>
<feature type="binding site" evidence="1">
    <location>
        <position position="139"/>
    </location>
    <ligand>
        <name>substrate</name>
    </ligand>
</feature>
<feature type="binding site" description="type 2 copper site" evidence="1">
    <location>
        <position position="174"/>
    </location>
    <ligand>
        <name>Cu cation</name>
        <dbReference type="ChEBI" id="CHEBI:23378"/>
        <label>2</label>
    </ligand>
</feature>
<feature type="binding site" description="type 1 copper site" evidence="1">
    <location>
        <position position="175"/>
    </location>
    <ligand>
        <name>Cu cation</name>
        <dbReference type="ChEBI" id="CHEBI:23378"/>
        <label>1</label>
    </ligand>
</feature>
<feature type="binding site" description="type 1 copper site" evidence="1">
    <location>
        <position position="183"/>
    </location>
    <ligand>
        <name>Cu cation</name>
        <dbReference type="ChEBI" id="CHEBI:23378"/>
        <label>1</label>
    </ligand>
</feature>
<feature type="binding site" description="type 1 copper site" evidence="1">
    <location>
        <position position="188"/>
    </location>
    <ligand>
        <name>Cu cation</name>
        <dbReference type="ChEBI" id="CHEBI:23378"/>
        <label>1</label>
    </ligand>
</feature>
<feature type="binding site" evidence="1">
    <location>
        <position position="280"/>
    </location>
    <ligand>
        <name>substrate</name>
    </ligand>
</feature>
<feature type="binding site" description="type 2 copper site" evidence="1">
    <location>
        <position position="329"/>
    </location>
    <ligand>
        <name>Cu cation</name>
        <dbReference type="ChEBI" id="CHEBI:23378"/>
        <label>2</label>
    </ligand>
</feature>
<feature type="lipid moiety-binding region" description="N-palmitoyl cysteine" evidence="5">
    <location>
        <position position="19"/>
    </location>
</feature>
<feature type="lipid moiety-binding region" description="S-diacylglycerol cysteine" evidence="5">
    <location>
        <position position="19"/>
    </location>
</feature>
<accession>Q9JYE1</accession>